<accession>Q2LR65</accession>
<comment type="function">
    <text evidence="1">Involved in chemotaxis. Part of a chemotaxis signal transduction system that modulates chemotaxis in response to various stimuli. Catalyzes the demethylation of specific methylglutamate residues introduced into the chemoreceptors (methyl-accepting chemotaxis proteins or MCP) by CheR. Also mediates the irreversible deamidation of specific glutamine residues to glutamic acid.</text>
</comment>
<comment type="catalytic activity">
    <reaction evidence="1">
        <text>[protein]-L-glutamate 5-O-methyl ester + H2O = L-glutamyl-[protein] + methanol + H(+)</text>
        <dbReference type="Rhea" id="RHEA:23236"/>
        <dbReference type="Rhea" id="RHEA-COMP:10208"/>
        <dbReference type="Rhea" id="RHEA-COMP:10311"/>
        <dbReference type="ChEBI" id="CHEBI:15377"/>
        <dbReference type="ChEBI" id="CHEBI:15378"/>
        <dbReference type="ChEBI" id="CHEBI:17790"/>
        <dbReference type="ChEBI" id="CHEBI:29973"/>
        <dbReference type="ChEBI" id="CHEBI:82795"/>
        <dbReference type="EC" id="3.1.1.61"/>
    </reaction>
</comment>
<comment type="catalytic activity">
    <reaction evidence="1">
        <text>L-glutaminyl-[protein] + H2O = L-glutamyl-[protein] + NH4(+)</text>
        <dbReference type="Rhea" id="RHEA:16441"/>
        <dbReference type="Rhea" id="RHEA-COMP:10207"/>
        <dbReference type="Rhea" id="RHEA-COMP:10208"/>
        <dbReference type="ChEBI" id="CHEBI:15377"/>
        <dbReference type="ChEBI" id="CHEBI:28938"/>
        <dbReference type="ChEBI" id="CHEBI:29973"/>
        <dbReference type="ChEBI" id="CHEBI:30011"/>
        <dbReference type="EC" id="3.5.1.44"/>
    </reaction>
</comment>
<comment type="subcellular location">
    <subcellularLocation>
        <location evidence="1">Cytoplasm</location>
    </subcellularLocation>
</comment>
<comment type="domain">
    <text evidence="1">Contains a C-terminal catalytic domain, and an N-terminal region which modulates catalytic activity.</text>
</comment>
<comment type="PTM">
    <text evidence="1">Phosphorylated by CheA. Phosphorylation of the N-terminal regulatory domain activates the methylesterase activity.</text>
</comment>
<comment type="similarity">
    <text evidence="1">Belongs to the CheB family.</text>
</comment>
<comment type="sequence caution" evidence="2">
    <conflict type="erroneous initiation">
        <sequence resource="EMBL-CDS" id="ABC76572"/>
    </conflict>
</comment>
<reference key="1">
    <citation type="journal article" date="2007" name="Proc. Natl. Acad. Sci. U.S.A.">
        <title>The genome of Syntrophus aciditrophicus: life at the thermodynamic limit of microbial growth.</title>
        <authorList>
            <person name="McInerney M.J."/>
            <person name="Rohlin L."/>
            <person name="Mouttaki H."/>
            <person name="Kim U."/>
            <person name="Krupp R.S."/>
            <person name="Rios-Hernandez L."/>
            <person name="Sieber J."/>
            <person name="Struchtemeyer C.G."/>
            <person name="Bhattacharyya A."/>
            <person name="Campbell J.W."/>
            <person name="Gunsalus R.P."/>
        </authorList>
    </citation>
    <scope>NUCLEOTIDE SEQUENCE [LARGE SCALE GENOMIC DNA]</scope>
    <source>
        <strain>SB</strain>
    </source>
</reference>
<proteinExistence type="inferred from homology"/>
<dbReference type="EC" id="3.1.1.61" evidence="1"/>
<dbReference type="EC" id="3.5.1.44" evidence="1"/>
<dbReference type="EMBL" id="CP000252">
    <property type="protein sequence ID" value="ABC76572.1"/>
    <property type="status" value="ALT_INIT"/>
    <property type="molecule type" value="Genomic_DNA"/>
</dbReference>
<dbReference type="SMR" id="Q2LR65"/>
<dbReference type="STRING" id="56780.SYN_00430"/>
<dbReference type="KEGG" id="sat:SYN_00430"/>
<dbReference type="eggNOG" id="COG2201">
    <property type="taxonomic scope" value="Bacteria"/>
</dbReference>
<dbReference type="HOGENOM" id="CLU_000445_51_0_7"/>
<dbReference type="InParanoid" id="Q2LR65"/>
<dbReference type="OrthoDB" id="9793421at2"/>
<dbReference type="Proteomes" id="UP000001933">
    <property type="component" value="Chromosome"/>
</dbReference>
<dbReference type="GO" id="GO:0005737">
    <property type="term" value="C:cytoplasm"/>
    <property type="evidence" value="ECO:0007669"/>
    <property type="project" value="UniProtKB-SubCell"/>
</dbReference>
<dbReference type="GO" id="GO:0000156">
    <property type="term" value="F:phosphorelay response regulator activity"/>
    <property type="evidence" value="ECO:0007669"/>
    <property type="project" value="InterPro"/>
</dbReference>
<dbReference type="GO" id="GO:0008984">
    <property type="term" value="F:protein-glutamate methylesterase activity"/>
    <property type="evidence" value="ECO:0007669"/>
    <property type="project" value="UniProtKB-UniRule"/>
</dbReference>
<dbReference type="GO" id="GO:0050568">
    <property type="term" value="F:protein-glutamine glutaminase activity"/>
    <property type="evidence" value="ECO:0007669"/>
    <property type="project" value="UniProtKB-UniRule"/>
</dbReference>
<dbReference type="GO" id="GO:0006935">
    <property type="term" value="P:chemotaxis"/>
    <property type="evidence" value="ECO:0007669"/>
    <property type="project" value="UniProtKB-UniRule"/>
</dbReference>
<dbReference type="CDD" id="cd16432">
    <property type="entry name" value="CheB_Rec"/>
    <property type="match status" value="1"/>
</dbReference>
<dbReference type="CDD" id="cd17541">
    <property type="entry name" value="REC_CheB-like"/>
    <property type="match status" value="1"/>
</dbReference>
<dbReference type="Gene3D" id="3.40.50.2300">
    <property type="match status" value="1"/>
</dbReference>
<dbReference type="Gene3D" id="3.40.50.180">
    <property type="entry name" value="Methylesterase CheB, C-terminal domain"/>
    <property type="match status" value="1"/>
</dbReference>
<dbReference type="HAMAP" id="MF_00099">
    <property type="entry name" value="CheB_chemtxs"/>
    <property type="match status" value="1"/>
</dbReference>
<dbReference type="InterPro" id="IPR008248">
    <property type="entry name" value="CheB-like"/>
</dbReference>
<dbReference type="InterPro" id="IPR035909">
    <property type="entry name" value="CheB_C"/>
</dbReference>
<dbReference type="InterPro" id="IPR011006">
    <property type="entry name" value="CheY-like_superfamily"/>
</dbReference>
<dbReference type="InterPro" id="IPR000673">
    <property type="entry name" value="Sig_transdc_resp-reg_Me-estase"/>
</dbReference>
<dbReference type="InterPro" id="IPR001789">
    <property type="entry name" value="Sig_transdc_resp-reg_receiver"/>
</dbReference>
<dbReference type="NCBIfam" id="NF001965">
    <property type="entry name" value="PRK00742.1"/>
    <property type="match status" value="1"/>
</dbReference>
<dbReference type="NCBIfam" id="NF009206">
    <property type="entry name" value="PRK12555.1"/>
    <property type="match status" value="1"/>
</dbReference>
<dbReference type="PANTHER" id="PTHR42872">
    <property type="entry name" value="PROTEIN-GLUTAMATE METHYLESTERASE/PROTEIN-GLUTAMINE GLUTAMINASE"/>
    <property type="match status" value="1"/>
</dbReference>
<dbReference type="PANTHER" id="PTHR42872:SF6">
    <property type="entry name" value="PROTEIN-GLUTAMATE METHYLESTERASE_PROTEIN-GLUTAMINE GLUTAMINASE"/>
    <property type="match status" value="1"/>
</dbReference>
<dbReference type="Pfam" id="PF01339">
    <property type="entry name" value="CheB_methylest"/>
    <property type="match status" value="1"/>
</dbReference>
<dbReference type="Pfam" id="PF00072">
    <property type="entry name" value="Response_reg"/>
    <property type="match status" value="1"/>
</dbReference>
<dbReference type="PIRSF" id="PIRSF000876">
    <property type="entry name" value="RR_chemtxs_CheB"/>
    <property type="match status" value="1"/>
</dbReference>
<dbReference type="SMART" id="SM00448">
    <property type="entry name" value="REC"/>
    <property type="match status" value="1"/>
</dbReference>
<dbReference type="SUPFAM" id="SSF52172">
    <property type="entry name" value="CheY-like"/>
    <property type="match status" value="1"/>
</dbReference>
<dbReference type="SUPFAM" id="SSF52738">
    <property type="entry name" value="Methylesterase CheB, C-terminal domain"/>
    <property type="match status" value="1"/>
</dbReference>
<dbReference type="PROSITE" id="PS50122">
    <property type="entry name" value="CHEB"/>
    <property type="match status" value="1"/>
</dbReference>
<dbReference type="PROSITE" id="PS50110">
    <property type="entry name" value="RESPONSE_REGULATORY"/>
    <property type="match status" value="1"/>
</dbReference>
<gene>
    <name evidence="1" type="primary">cheB1</name>
    <name type="ordered locus">SYNAS_06930</name>
    <name type="ORF">SYN_00430</name>
</gene>
<feature type="chain" id="PRO_0000264328" description="Protein-glutamate methylesterase/protein-glutamine glutaminase 1">
    <location>
        <begin position="1"/>
        <end position="350"/>
    </location>
</feature>
<feature type="domain" description="Response regulatory" evidence="1">
    <location>
        <begin position="3"/>
        <end position="121"/>
    </location>
</feature>
<feature type="domain" description="CheB-type methylesterase" evidence="1">
    <location>
        <begin position="148"/>
        <end position="342"/>
    </location>
</feature>
<feature type="active site" evidence="1">
    <location>
        <position position="170"/>
    </location>
</feature>
<feature type="active site" evidence="1">
    <location>
        <position position="197"/>
    </location>
</feature>
<feature type="active site" evidence="1">
    <location>
        <position position="290"/>
    </location>
</feature>
<feature type="modified residue" description="4-aspartylphosphate" evidence="1">
    <location>
        <position position="54"/>
    </location>
</feature>
<name>CHEB1_SYNAS</name>
<protein>
    <recommendedName>
        <fullName evidence="1">Protein-glutamate methylesterase/protein-glutamine glutaminase 1</fullName>
        <ecNumber evidence="1">3.1.1.61</ecNumber>
        <ecNumber evidence="1">3.5.1.44</ecNumber>
    </recommendedName>
</protein>
<keyword id="KW-0145">Chemotaxis</keyword>
<keyword id="KW-0963">Cytoplasm</keyword>
<keyword id="KW-0378">Hydrolase</keyword>
<keyword id="KW-0597">Phosphoprotein</keyword>
<keyword id="KW-1185">Reference proteome</keyword>
<evidence type="ECO:0000255" key="1">
    <source>
        <dbReference type="HAMAP-Rule" id="MF_00099"/>
    </source>
</evidence>
<evidence type="ECO:0000305" key="2"/>
<organism>
    <name type="scientific">Syntrophus aciditrophicus (strain SB)</name>
    <dbReference type="NCBI Taxonomy" id="56780"/>
    <lineage>
        <taxon>Bacteria</taxon>
        <taxon>Pseudomonadati</taxon>
        <taxon>Thermodesulfobacteriota</taxon>
        <taxon>Syntrophia</taxon>
        <taxon>Syntrophales</taxon>
        <taxon>Syntrophaceae</taxon>
        <taxon>Syntrophus</taxon>
    </lineage>
</organism>
<sequence>MIKVLIVEDSPVVRELLSHILHSDPQIRVVGVAESGEEALKEVVRLRPDLITMDVNLPRMDGFETTRRIMEEIPTPIIIVSAAWVSTEVEKTFRALEAGALAVLEKPSIAARDYDIRARDLIRAVKAMSEVKVIRRWSRSPRIEPAPPASGEPDIGKITKRFEVVAMGASTGGPTVLKQILSDLPDNFTIPILIVQHMTQGFIPGFVDWLSRAANYPVSVAVHGEEIRPGHAYVAPDGLHMGVNALGKIILTKGEPENGLCPSVSYLFRSVYRAYGENAVGVLLTGMGKDGAYELKVMKDCGMITIAQNKETSVVYGMPGEAIGMNAASYVLPPEKIARVLVKLAGSVAP</sequence>